<accession>B0BBV0</accession>
<reference key="1">
    <citation type="journal article" date="2008" name="Genome Res.">
        <title>Chlamydia trachomatis: genome sequence analysis of lymphogranuloma venereum isolates.</title>
        <authorList>
            <person name="Thomson N.R."/>
            <person name="Holden M.T.G."/>
            <person name="Carder C."/>
            <person name="Lennard N."/>
            <person name="Lockey S.J."/>
            <person name="Marsh P."/>
            <person name="Skipp P."/>
            <person name="O'Connor C.D."/>
            <person name="Goodhead I."/>
            <person name="Norbertzcak H."/>
            <person name="Harris B."/>
            <person name="Ormond D."/>
            <person name="Rance R."/>
            <person name="Quail M.A."/>
            <person name="Parkhill J."/>
            <person name="Stephens R.S."/>
            <person name="Clarke I.N."/>
        </authorList>
    </citation>
    <scope>NUCLEOTIDE SEQUENCE [LARGE SCALE GENOMIC DNA]</scope>
    <source>
        <strain>UCH-1/proctitis</strain>
    </source>
</reference>
<keyword id="KW-0488">Methylation</keyword>
<keyword id="KW-0687">Ribonucleoprotein</keyword>
<keyword id="KW-0689">Ribosomal protein</keyword>
<keyword id="KW-0694">RNA-binding</keyword>
<keyword id="KW-0699">rRNA-binding</keyword>
<evidence type="ECO:0000255" key="1">
    <source>
        <dbReference type="HAMAP-Rule" id="MF_00736"/>
    </source>
</evidence>
<evidence type="ECO:0000305" key="2"/>
<protein>
    <recommendedName>
        <fullName evidence="1">Large ribosomal subunit protein uL11</fullName>
    </recommendedName>
    <alternativeName>
        <fullName evidence="2">50S ribosomal protein L11</fullName>
    </alternativeName>
</protein>
<organism>
    <name type="scientific">Chlamydia trachomatis serovar L2b (strain UCH-1/proctitis)</name>
    <dbReference type="NCBI Taxonomy" id="471473"/>
    <lineage>
        <taxon>Bacteria</taxon>
        <taxon>Pseudomonadati</taxon>
        <taxon>Chlamydiota</taxon>
        <taxon>Chlamydiia</taxon>
        <taxon>Chlamydiales</taxon>
        <taxon>Chlamydiaceae</taxon>
        <taxon>Chlamydia/Chlamydophila group</taxon>
        <taxon>Chlamydia</taxon>
    </lineage>
</organism>
<sequence length="141" mass="15054">MSNKKIIKIIKLQIPGGKANPAPPIGPALGAAGVNIMGFCKEFNAATQDRPGDLLPVVITVYSDKTFSFVMKQSPVSSLIKKALGLESGSKIPNRNKVGKLTRAQITAIAEQKMKDMDVVLLESAERMVEGTARSMGVDVE</sequence>
<proteinExistence type="inferred from homology"/>
<name>RL11_CHLTB</name>
<comment type="function">
    <text evidence="1">Forms part of the ribosomal stalk which helps the ribosome interact with GTP-bound translation factors.</text>
</comment>
<comment type="subunit">
    <text evidence="1">Part of the ribosomal stalk of the 50S ribosomal subunit. Interacts with L10 and the large rRNA to form the base of the stalk. L10 forms an elongated spine to which L12 dimers bind in a sequential fashion forming a multimeric L10(L12)X complex.</text>
</comment>
<comment type="PTM">
    <text evidence="1">One or more lysine residues are methylated.</text>
</comment>
<comment type="similarity">
    <text evidence="1">Belongs to the universal ribosomal protein uL11 family.</text>
</comment>
<dbReference type="EMBL" id="AM884177">
    <property type="protein sequence ID" value="CAP06965.1"/>
    <property type="molecule type" value="Genomic_DNA"/>
</dbReference>
<dbReference type="RefSeq" id="WP_009872556.1">
    <property type="nucleotide sequence ID" value="NC_010280.2"/>
</dbReference>
<dbReference type="SMR" id="B0BBV0"/>
<dbReference type="KEGG" id="ctl:CTLon_0567"/>
<dbReference type="HOGENOM" id="CLU_074237_2_0_0"/>
<dbReference type="Proteomes" id="UP001154401">
    <property type="component" value="Chromosome"/>
</dbReference>
<dbReference type="GO" id="GO:0022625">
    <property type="term" value="C:cytosolic large ribosomal subunit"/>
    <property type="evidence" value="ECO:0007669"/>
    <property type="project" value="TreeGrafter"/>
</dbReference>
<dbReference type="GO" id="GO:0070180">
    <property type="term" value="F:large ribosomal subunit rRNA binding"/>
    <property type="evidence" value="ECO:0007669"/>
    <property type="project" value="UniProtKB-UniRule"/>
</dbReference>
<dbReference type="GO" id="GO:0003735">
    <property type="term" value="F:structural constituent of ribosome"/>
    <property type="evidence" value="ECO:0007669"/>
    <property type="project" value="InterPro"/>
</dbReference>
<dbReference type="GO" id="GO:0006412">
    <property type="term" value="P:translation"/>
    <property type="evidence" value="ECO:0007669"/>
    <property type="project" value="UniProtKB-UniRule"/>
</dbReference>
<dbReference type="CDD" id="cd00349">
    <property type="entry name" value="Ribosomal_L11"/>
    <property type="match status" value="1"/>
</dbReference>
<dbReference type="FunFam" id="1.10.10.250:FF:000001">
    <property type="entry name" value="50S ribosomal protein L11"/>
    <property type="match status" value="1"/>
</dbReference>
<dbReference type="FunFam" id="3.30.1550.10:FF:000001">
    <property type="entry name" value="50S ribosomal protein L11"/>
    <property type="match status" value="1"/>
</dbReference>
<dbReference type="Gene3D" id="1.10.10.250">
    <property type="entry name" value="Ribosomal protein L11, C-terminal domain"/>
    <property type="match status" value="1"/>
</dbReference>
<dbReference type="Gene3D" id="3.30.1550.10">
    <property type="entry name" value="Ribosomal protein L11/L12, N-terminal domain"/>
    <property type="match status" value="1"/>
</dbReference>
<dbReference type="HAMAP" id="MF_00736">
    <property type="entry name" value="Ribosomal_uL11"/>
    <property type="match status" value="1"/>
</dbReference>
<dbReference type="InterPro" id="IPR000911">
    <property type="entry name" value="Ribosomal_uL11"/>
</dbReference>
<dbReference type="InterPro" id="IPR006519">
    <property type="entry name" value="Ribosomal_uL11_bac-typ"/>
</dbReference>
<dbReference type="InterPro" id="IPR020783">
    <property type="entry name" value="Ribosomal_uL11_C"/>
</dbReference>
<dbReference type="InterPro" id="IPR036769">
    <property type="entry name" value="Ribosomal_uL11_C_sf"/>
</dbReference>
<dbReference type="InterPro" id="IPR020785">
    <property type="entry name" value="Ribosomal_uL11_CS"/>
</dbReference>
<dbReference type="InterPro" id="IPR020784">
    <property type="entry name" value="Ribosomal_uL11_N"/>
</dbReference>
<dbReference type="InterPro" id="IPR036796">
    <property type="entry name" value="Ribosomal_uL11_N_sf"/>
</dbReference>
<dbReference type="NCBIfam" id="TIGR01632">
    <property type="entry name" value="L11_bact"/>
    <property type="match status" value="1"/>
</dbReference>
<dbReference type="PANTHER" id="PTHR11661">
    <property type="entry name" value="60S RIBOSOMAL PROTEIN L12"/>
    <property type="match status" value="1"/>
</dbReference>
<dbReference type="PANTHER" id="PTHR11661:SF1">
    <property type="entry name" value="LARGE RIBOSOMAL SUBUNIT PROTEIN UL11M"/>
    <property type="match status" value="1"/>
</dbReference>
<dbReference type="Pfam" id="PF00298">
    <property type="entry name" value="Ribosomal_L11"/>
    <property type="match status" value="1"/>
</dbReference>
<dbReference type="Pfam" id="PF03946">
    <property type="entry name" value="Ribosomal_L11_N"/>
    <property type="match status" value="1"/>
</dbReference>
<dbReference type="SMART" id="SM00649">
    <property type="entry name" value="RL11"/>
    <property type="match status" value="1"/>
</dbReference>
<dbReference type="SUPFAM" id="SSF54747">
    <property type="entry name" value="Ribosomal L11/L12e N-terminal domain"/>
    <property type="match status" value="1"/>
</dbReference>
<dbReference type="SUPFAM" id="SSF46906">
    <property type="entry name" value="Ribosomal protein L11, C-terminal domain"/>
    <property type="match status" value="1"/>
</dbReference>
<dbReference type="PROSITE" id="PS00359">
    <property type="entry name" value="RIBOSOMAL_L11"/>
    <property type="match status" value="1"/>
</dbReference>
<gene>
    <name evidence="1" type="primary">rplK</name>
    <name type="ordered locus">CTLon_0567</name>
</gene>
<feature type="chain" id="PRO_1000195593" description="Large ribosomal subunit protein uL11">
    <location>
        <begin position="1"/>
        <end position="141"/>
    </location>
</feature>